<sequence>MSVSTALKLCIFFTGFAGIVAEYSLATLATYLLGNAVLQWSVVISIFLLSMGLGSHASRYIPDDKTPLAFVLAELFLSLLVPFSVPIAYHFANNFLHLQTVIYGLSFVIGSLIGLEIPLAVRINNMYEELKVNISSVLEKDYLGSVPAGLLYAYLFLPKLGLPLTAILAGFFNLISAFLLVKVLKPKKFLKFLAIFTFFLLATYAVGHKRITLYEEQKFYGEEIIHFEQTPYQKIVLTRFGKHYSLYLDGHLQFSTLDEKRYHETLVHVPASFLKRYEKALILGGGDGLALRELRKYPFGEIHLVDLDPKMIEFSKKNLVMRKINENSFYDTRLKVFSEDAFNFVKKTKEKYDFVIVDLIDPRTPSSARVYSLEFYMSLKNKLKEDGIFITQAGDTFYKREVFCSILKTIKKAGFYAYPLVVYIPTFGEWGMVIGSKEPLNFENFELKEKTEFLNRERALAFYTLGKSLECPNVEVNTLLKPVLIYYYYKIQN</sequence>
<comment type="function">
    <text evidence="1">Catalyzes the irreversible transfer of a propylamine group from the amino donor S-adenosylmethioninamine (decarboxy-AdoMet) to putrescine (1,4-diaminobutane) to yield spermidine.</text>
</comment>
<comment type="catalytic activity">
    <reaction evidence="1">
        <text>S-adenosyl 3-(methylsulfanyl)propylamine + putrescine = S-methyl-5'-thioadenosine + spermidine + H(+)</text>
        <dbReference type="Rhea" id="RHEA:12721"/>
        <dbReference type="ChEBI" id="CHEBI:15378"/>
        <dbReference type="ChEBI" id="CHEBI:17509"/>
        <dbReference type="ChEBI" id="CHEBI:57443"/>
        <dbReference type="ChEBI" id="CHEBI:57834"/>
        <dbReference type="ChEBI" id="CHEBI:326268"/>
        <dbReference type="EC" id="2.5.1.16"/>
    </reaction>
</comment>
<comment type="pathway">
    <text evidence="1">Amine and polyamine biosynthesis; spermidine biosynthesis; spermidine from putrescine: step 1/1.</text>
</comment>
<comment type="subunit">
    <text evidence="1">Homodimer or homotetramer.</text>
</comment>
<comment type="subcellular location">
    <subcellularLocation>
        <location evidence="1">Cell membrane</location>
        <topology evidence="1">Multi-pass membrane protein</topology>
    </subcellularLocation>
</comment>
<comment type="similarity">
    <text evidence="1">Belongs to the spermidine/spermine synthase family.</text>
</comment>
<keyword id="KW-1003">Cell membrane</keyword>
<keyword id="KW-0472">Membrane</keyword>
<keyword id="KW-0620">Polyamine biosynthesis</keyword>
<keyword id="KW-1185">Reference proteome</keyword>
<keyword id="KW-0745">Spermidine biosynthesis</keyword>
<keyword id="KW-0808">Transferase</keyword>
<keyword id="KW-0812">Transmembrane</keyword>
<keyword id="KW-1133">Transmembrane helix</keyword>
<evidence type="ECO:0000255" key="1">
    <source>
        <dbReference type="HAMAP-Rule" id="MF_00198"/>
    </source>
</evidence>
<feature type="chain" id="PRO_0000156464" description="Polyamine aminopropyltransferase 2">
    <location>
        <begin position="1"/>
        <end position="493"/>
    </location>
</feature>
<feature type="transmembrane region" description="Helical" evidence="1">
    <location>
        <begin position="9"/>
        <end position="29"/>
    </location>
</feature>
<feature type="transmembrane region" description="Helical" evidence="1">
    <location>
        <begin position="32"/>
        <end position="52"/>
    </location>
</feature>
<feature type="transmembrane region" description="Helical" evidence="1">
    <location>
        <begin position="68"/>
        <end position="88"/>
    </location>
</feature>
<feature type="transmembrane region" description="Helical" evidence="1">
    <location>
        <begin position="101"/>
        <end position="121"/>
    </location>
</feature>
<feature type="transmembrane region" description="Helical" evidence="1">
    <location>
        <begin position="137"/>
        <end position="157"/>
    </location>
</feature>
<feature type="transmembrane region" description="Helical" evidence="1">
    <location>
        <begin position="161"/>
        <end position="181"/>
    </location>
</feature>
<feature type="transmembrane region" description="Helical" evidence="1">
    <location>
        <begin position="188"/>
        <end position="208"/>
    </location>
</feature>
<feature type="domain" description="PABS" evidence="1">
    <location>
        <begin position="202"/>
        <end position="437"/>
    </location>
</feature>
<feature type="region of interest" description="Spermidine synthase">
    <location>
        <begin position="187"/>
        <end position="448"/>
    </location>
</feature>
<feature type="active site" description="Proton acceptor" evidence="1">
    <location>
        <position position="358"/>
    </location>
</feature>
<feature type="binding site" evidence="1">
    <location>
        <position position="233"/>
    </location>
    <ligand>
        <name>S-methyl-5'-thioadenosine</name>
        <dbReference type="ChEBI" id="CHEBI:17509"/>
    </ligand>
</feature>
<feature type="binding site" evidence="1">
    <location>
        <position position="263"/>
    </location>
    <ligand>
        <name>spermidine</name>
        <dbReference type="ChEBI" id="CHEBI:57834"/>
    </ligand>
</feature>
<feature type="binding site" evidence="1">
    <location>
        <position position="287"/>
    </location>
    <ligand>
        <name>spermidine</name>
        <dbReference type="ChEBI" id="CHEBI:57834"/>
    </ligand>
</feature>
<feature type="binding site" evidence="1">
    <location>
        <position position="306"/>
    </location>
    <ligand>
        <name>S-methyl-5'-thioadenosine</name>
        <dbReference type="ChEBI" id="CHEBI:17509"/>
    </ligand>
</feature>
<feature type="binding site" evidence="1">
    <location>
        <begin position="340"/>
        <end position="341"/>
    </location>
    <ligand>
        <name>S-methyl-5'-thioadenosine</name>
        <dbReference type="ChEBI" id="CHEBI:17509"/>
    </ligand>
</feature>
<reference key="1">
    <citation type="journal article" date="1998" name="Nature">
        <title>The complete genome of the hyperthermophilic bacterium Aquifex aeolicus.</title>
        <authorList>
            <person name="Deckert G."/>
            <person name="Warren P.V."/>
            <person name="Gaasterland T."/>
            <person name="Young W.G."/>
            <person name="Lenox A.L."/>
            <person name="Graham D.E."/>
            <person name="Overbeek R."/>
            <person name="Snead M.A."/>
            <person name="Keller M."/>
            <person name="Aujay M."/>
            <person name="Huber R."/>
            <person name="Feldman R.A."/>
            <person name="Short J.M."/>
            <person name="Olsen G.J."/>
            <person name="Swanson R.V."/>
        </authorList>
    </citation>
    <scope>NUCLEOTIDE SEQUENCE [LARGE SCALE GENOMIC DNA]</scope>
    <source>
        <strain>VF5</strain>
    </source>
</reference>
<accession>O67365</accession>
<protein>
    <recommendedName>
        <fullName evidence="1">Polyamine aminopropyltransferase 2</fullName>
    </recommendedName>
    <alternativeName>
        <fullName evidence="1">Putrescine aminopropyltransferase 2</fullName>
        <shortName evidence="1">PAPT 2</shortName>
    </alternativeName>
    <alternativeName>
        <fullName evidence="1">Spermidine synthase 2</fullName>
        <shortName evidence="1">SPDS 2</shortName>
        <shortName evidence="1">SPDSY 2</shortName>
        <ecNumber evidence="1">2.5.1.16</ecNumber>
    </alternativeName>
</protein>
<name>SPEE2_AQUAE</name>
<organism>
    <name type="scientific">Aquifex aeolicus (strain VF5)</name>
    <dbReference type="NCBI Taxonomy" id="224324"/>
    <lineage>
        <taxon>Bacteria</taxon>
        <taxon>Pseudomonadati</taxon>
        <taxon>Aquificota</taxon>
        <taxon>Aquificia</taxon>
        <taxon>Aquificales</taxon>
        <taxon>Aquificaceae</taxon>
        <taxon>Aquifex</taxon>
    </lineage>
</organism>
<proteinExistence type="inferred from homology"/>
<dbReference type="EC" id="2.5.1.16" evidence="1"/>
<dbReference type="EMBL" id="AE000657">
    <property type="protein sequence ID" value="AAC07337.1"/>
    <property type="molecule type" value="Genomic_DNA"/>
</dbReference>
<dbReference type="PIR" id="B70417">
    <property type="entry name" value="B70417"/>
</dbReference>
<dbReference type="RefSeq" id="NP_213929.1">
    <property type="nucleotide sequence ID" value="NC_000918.1"/>
</dbReference>
<dbReference type="RefSeq" id="WP_010880867.1">
    <property type="nucleotide sequence ID" value="NC_000918.1"/>
</dbReference>
<dbReference type="SMR" id="O67365"/>
<dbReference type="STRING" id="224324.aq_1350"/>
<dbReference type="EnsemblBacteria" id="AAC07337">
    <property type="protein sequence ID" value="AAC07337"/>
    <property type="gene ID" value="aq_1350"/>
</dbReference>
<dbReference type="KEGG" id="aae:aq_1350"/>
<dbReference type="PATRIC" id="fig|224324.8.peg.1056"/>
<dbReference type="eggNOG" id="COG4262">
    <property type="taxonomic scope" value="Bacteria"/>
</dbReference>
<dbReference type="HOGENOM" id="CLU_034289_1_0_0"/>
<dbReference type="InParanoid" id="O67365"/>
<dbReference type="OrthoDB" id="9793120at2"/>
<dbReference type="UniPathway" id="UPA00248">
    <property type="reaction ID" value="UER00314"/>
</dbReference>
<dbReference type="Proteomes" id="UP000000798">
    <property type="component" value="Chromosome"/>
</dbReference>
<dbReference type="GO" id="GO:0005886">
    <property type="term" value="C:plasma membrane"/>
    <property type="evidence" value="ECO:0007669"/>
    <property type="project" value="UniProtKB-SubCell"/>
</dbReference>
<dbReference type="GO" id="GO:0004766">
    <property type="term" value="F:spermidine synthase activity"/>
    <property type="evidence" value="ECO:0007669"/>
    <property type="project" value="UniProtKB-UniRule"/>
</dbReference>
<dbReference type="GO" id="GO:0010487">
    <property type="term" value="F:thermospermine synthase activity"/>
    <property type="evidence" value="ECO:0007669"/>
    <property type="project" value="UniProtKB-ARBA"/>
</dbReference>
<dbReference type="GO" id="GO:0006596">
    <property type="term" value="P:polyamine biosynthetic process"/>
    <property type="evidence" value="ECO:0000318"/>
    <property type="project" value="GO_Central"/>
</dbReference>
<dbReference type="GO" id="GO:0008295">
    <property type="term" value="P:spermidine biosynthetic process"/>
    <property type="evidence" value="ECO:0007669"/>
    <property type="project" value="UniProtKB-UniRule"/>
</dbReference>
<dbReference type="CDD" id="cd02440">
    <property type="entry name" value="AdoMet_MTases"/>
    <property type="match status" value="1"/>
</dbReference>
<dbReference type="Gene3D" id="3.40.50.150">
    <property type="entry name" value="Vaccinia Virus protein VP39"/>
    <property type="match status" value="1"/>
</dbReference>
<dbReference type="HAMAP" id="MF_00198">
    <property type="entry name" value="Spermidine_synth"/>
    <property type="match status" value="1"/>
</dbReference>
<dbReference type="InterPro" id="IPR030374">
    <property type="entry name" value="PABS"/>
</dbReference>
<dbReference type="InterPro" id="IPR030373">
    <property type="entry name" value="PABS_CS"/>
</dbReference>
<dbReference type="InterPro" id="IPR029063">
    <property type="entry name" value="SAM-dependent_MTases_sf"/>
</dbReference>
<dbReference type="InterPro" id="IPR001045">
    <property type="entry name" value="Spermi_synthase"/>
</dbReference>
<dbReference type="NCBIfam" id="NF037959">
    <property type="entry name" value="MFS_SpdSyn"/>
    <property type="match status" value="1"/>
</dbReference>
<dbReference type="NCBIfam" id="NF002956">
    <property type="entry name" value="PRK03612.1"/>
    <property type="match status" value="1"/>
</dbReference>
<dbReference type="PANTHER" id="PTHR43317">
    <property type="entry name" value="THERMOSPERMINE SYNTHASE ACAULIS5"/>
    <property type="match status" value="1"/>
</dbReference>
<dbReference type="PANTHER" id="PTHR43317:SF1">
    <property type="entry name" value="THERMOSPERMINE SYNTHASE ACAULIS5"/>
    <property type="match status" value="1"/>
</dbReference>
<dbReference type="Pfam" id="PF01564">
    <property type="entry name" value="Spermine_synth"/>
    <property type="match status" value="1"/>
</dbReference>
<dbReference type="SUPFAM" id="SSF53335">
    <property type="entry name" value="S-adenosyl-L-methionine-dependent methyltransferases"/>
    <property type="match status" value="1"/>
</dbReference>
<dbReference type="PROSITE" id="PS01330">
    <property type="entry name" value="PABS_1"/>
    <property type="match status" value="1"/>
</dbReference>
<dbReference type="PROSITE" id="PS51006">
    <property type="entry name" value="PABS_2"/>
    <property type="match status" value="1"/>
</dbReference>
<gene>
    <name evidence="1" type="primary">speE2</name>
    <name type="ordered locus">aq_1350</name>
</gene>